<sequence>MARITVEDCLNQIPNRFKLTLAATYRARELAQGHAPRLDSKDKPTVTALREIASGLTGLEMLRKVPT</sequence>
<name>RPOZ_BORBR</name>
<protein>
    <recommendedName>
        <fullName evidence="1">DNA-directed RNA polymerase subunit omega</fullName>
        <shortName evidence="1">RNAP omega subunit</shortName>
        <ecNumber evidence="1">2.7.7.6</ecNumber>
    </recommendedName>
    <alternativeName>
        <fullName evidence="1">RNA polymerase omega subunit</fullName>
    </alternativeName>
    <alternativeName>
        <fullName evidence="1">Transcriptase subunit omega</fullName>
    </alternativeName>
</protein>
<reference key="1">
    <citation type="journal article" date="2003" name="Nat. Genet.">
        <title>Comparative analysis of the genome sequences of Bordetella pertussis, Bordetella parapertussis and Bordetella bronchiseptica.</title>
        <authorList>
            <person name="Parkhill J."/>
            <person name="Sebaihia M."/>
            <person name="Preston A."/>
            <person name="Murphy L.D."/>
            <person name="Thomson N.R."/>
            <person name="Harris D.E."/>
            <person name="Holden M.T.G."/>
            <person name="Churcher C.M."/>
            <person name="Bentley S.D."/>
            <person name="Mungall K.L."/>
            <person name="Cerdeno-Tarraga A.-M."/>
            <person name="Temple L."/>
            <person name="James K.D."/>
            <person name="Harris B."/>
            <person name="Quail M.A."/>
            <person name="Achtman M."/>
            <person name="Atkin R."/>
            <person name="Baker S."/>
            <person name="Basham D."/>
            <person name="Bason N."/>
            <person name="Cherevach I."/>
            <person name="Chillingworth T."/>
            <person name="Collins M."/>
            <person name="Cronin A."/>
            <person name="Davis P."/>
            <person name="Doggett J."/>
            <person name="Feltwell T."/>
            <person name="Goble A."/>
            <person name="Hamlin N."/>
            <person name="Hauser H."/>
            <person name="Holroyd S."/>
            <person name="Jagels K."/>
            <person name="Leather S."/>
            <person name="Moule S."/>
            <person name="Norberczak H."/>
            <person name="O'Neil S."/>
            <person name="Ormond D."/>
            <person name="Price C."/>
            <person name="Rabbinowitsch E."/>
            <person name="Rutter S."/>
            <person name="Sanders M."/>
            <person name="Saunders D."/>
            <person name="Seeger K."/>
            <person name="Sharp S."/>
            <person name="Simmonds M."/>
            <person name="Skelton J."/>
            <person name="Squares R."/>
            <person name="Squares S."/>
            <person name="Stevens K."/>
            <person name="Unwin L."/>
            <person name="Whitehead S."/>
            <person name="Barrell B.G."/>
            <person name="Maskell D.J."/>
        </authorList>
    </citation>
    <scope>NUCLEOTIDE SEQUENCE [LARGE SCALE GENOMIC DNA]</scope>
    <source>
        <strain>ATCC BAA-588 / NCTC 13252 / RB50</strain>
    </source>
</reference>
<organism>
    <name type="scientific">Bordetella bronchiseptica (strain ATCC BAA-588 / NCTC 13252 / RB50)</name>
    <name type="common">Alcaligenes bronchisepticus</name>
    <dbReference type="NCBI Taxonomy" id="257310"/>
    <lineage>
        <taxon>Bacteria</taxon>
        <taxon>Pseudomonadati</taxon>
        <taxon>Pseudomonadota</taxon>
        <taxon>Betaproteobacteria</taxon>
        <taxon>Burkholderiales</taxon>
        <taxon>Alcaligenaceae</taxon>
        <taxon>Bordetella</taxon>
    </lineage>
</organism>
<dbReference type="EC" id="2.7.7.6" evidence="1"/>
<dbReference type="EMBL" id="BX640446">
    <property type="protein sequence ID" value="CAE33464.1"/>
    <property type="molecule type" value="Genomic_DNA"/>
</dbReference>
<dbReference type="RefSeq" id="WP_003811126.1">
    <property type="nucleotide sequence ID" value="NC_002927.3"/>
</dbReference>
<dbReference type="SMR" id="Q7WI79"/>
<dbReference type="GeneID" id="93204790"/>
<dbReference type="KEGG" id="bbr:BB2972"/>
<dbReference type="eggNOG" id="COG1758">
    <property type="taxonomic scope" value="Bacteria"/>
</dbReference>
<dbReference type="HOGENOM" id="CLU_125406_5_1_4"/>
<dbReference type="Proteomes" id="UP000001027">
    <property type="component" value="Chromosome"/>
</dbReference>
<dbReference type="GO" id="GO:0000428">
    <property type="term" value="C:DNA-directed RNA polymerase complex"/>
    <property type="evidence" value="ECO:0007669"/>
    <property type="project" value="UniProtKB-KW"/>
</dbReference>
<dbReference type="GO" id="GO:0003677">
    <property type="term" value="F:DNA binding"/>
    <property type="evidence" value="ECO:0007669"/>
    <property type="project" value="UniProtKB-UniRule"/>
</dbReference>
<dbReference type="GO" id="GO:0003899">
    <property type="term" value="F:DNA-directed RNA polymerase activity"/>
    <property type="evidence" value="ECO:0007669"/>
    <property type="project" value="UniProtKB-UniRule"/>
</dbReference>
<dbReference type="GO" id="GO:0006351">
    <property type="term" value="P:DNA-templated transcription"/>
    <property type="evidence" value="ECO:0007669"/>
    <property type="project" value="UniProtKB-UniRule"/>
</dbReference>
<dbReference type="Gene3D" id="3.90.940.10">
    <property type="match status" value="1"/>
</dbReference>
<dbReference type="HAMAP" id="MF_00366">
    <property type="entry name" value="RNApol_bact_RpoZ"/>
    <property type="match status" value="1"/>
</dbReference>
<dbReference type="InterPro" id="IPR003716">
    <property type="entry name" value="DNA-dir_RNA_pol_omega"/>
</dbReference>
<dbReference type="InterPro" id="IPR006110">
    <property type="entry name" value="Pol_omega/Rpo6/RPB6"/>
</dbReference>
<dbReference type="InterPro" id="IPR036161">
    <property type="entry name" value="RPB6/omega-like_sf"/>
</dbReference>
<dbReference type="NCBIfam" id="TIGR00690">
    <property type="entry name" value="rpoZ"/>
    <property type="match status" value="1"/>
</dbReference>
<dbReference type="PANTHER" id="PTHR34476">
    <property type="entry name" value="DNA-DIRECTED RNA POLYMERASE SUBUNIT OMEGA"/>
    <property type="match status" value="1"/>
</dbReference>
<dbReference type="PANTHER" id="PTHR34476:SF1">
    <property type="entry name" value="DNA-DIRECTED RNA POLYMERASE SUBUNIT OMEGA"/>
    <property type="match status" value="1"/>
</dbReference>
<dbReference type="Pfam" id="PF01192">
    <property type="entry name" value="RNA_pol_Rpb6"/>
    <property type="match status" value="1"/>
</dbReference>
<dbReference type="SMART" id="SM01409">
    <property type="entry name" value="RNA_pol_Rpb6"/>
    <property type="match status" value="1"/>
</dbReference>
<dbReference type="SUPFAM" id="SSF63562">
    <property type="entry name" value="RPB6/omega subunit-like"/>
    <property type="match status" value="1"/>
</dbReference>
<keyword id="KW-0240">DNA-directed RNA polymerase</keyword>
<keyword id="KW-0548">Nucleotidyltransferase</keyword>
<keyword id="KW-0804">Transcription</keyword>
<keyword id="KW-0808">Transferase</keyword>
<comment type="function">
    <text evidence="1">Promotes RNA polymerase assembly. Latches the N- and C-terminal regions of the beta' subunit thereby facilitating its interaction with the beta and alpha subunits.</text>
</comment>
<comment type="catalytic activity">
    <reaction evidence="1">
        <text>RNA(n) + a ribonucleoside 5'-triphosphate = RNA(n+1) + diphosphate</text>
        <dbReference type="Rhea" id="RHEA:21248"/>
        <dbReference type="Rhea" id="RHEA-COMP:14527"/>
        <dbReference type="Rhea" id="RHEA-COMP:17342"/>
        <dbReference type="ChEBI" id="CHEBI:33019"/>
        <dbReference type="ChEBI" id="CHEBI:61557"/>
        <dbReference type="ChEBI" id="CHEBI:140395"/>
        <dbReference type="EC" id="2.7.7.6"/>
    </reaction>
</comment>
<comment type="subunit">
    <text evidence="1">The RNAP catalytic core consists of 2 alpha, 1 beta, 1 beta' and 1 omega subunit. When a sigma factor is associated with the core the holoenzyme is formed, which can initiate transcription.</text>
</comment>
<comment type="similarity">
    <text evidence="1">Belongs to the RNA polymerase subunit omega family.</text>
</comment>
<proteinExistence type="inferred from homology"/>
<accession>Q7WI79</accession>
<gene>
    <name evidence="1" type="primary">rpoZ</name>
    <name type="ordered locus">BB2972</name>
</gene>
<evidence type="ECO:0000255" key="1">
    <source>
        <dbReference type="HAMAP-Rule" id="MF_00366"/>
    </source>
</evidence>
<feature type="chain" id="PRO_0000128918" description="DNA-directed RNA polymerase subunit omega">
    <location>
        <begin position="1"/>
        <end position="67"/>
    </location>
</feature>